<name>LUXO_VIBCH</name>
<comment type="function">
    <text>Involved in the regulation of different processes depending on the cell density. Acts together with sigma-54 to repress, perhaps indirectly, some genes.</text>
</comment>
<comment type="miscellaneous">
    <text>In strain El Tor C6706, at low cell density, LuxO acts indirectly on virulence gene expression by repressing hapR This leads to the expression of virulence factors. In strain El Tor N16961, the hapR gene is inactive due to a natural frameshift mutation.</text>
</comment>
<reference key="1">
    <citation type="journal article" date="2000" name="Nature">
        <title>DNA sequence of both chromosomes of the cholera pathogen Vibrio cholerae.</title>
        <authorList>
            <person name="Heidelberg J.F."/>
            <person name="Eisen J.A."/>
            <person name="Nelson W.C."/>
            <person name="Clayton R.A."/>
            <person name="Gwinn M.L."/>
            <person name="Dodson R.J."/>
            <person name="Haft D.H."/>
            <person name="Hickey E.K."/>
            <person name="Peterson J.D."/>
            <person name="Umayam L.A."/>
            <person name="Gill S.R."/>
            <person name="Nelson K.E."/>
            <person name="Read T.D."/>
            <person name="Tettelin H."/>
            <person name="Richardson D.L."/>
            <person name="Ermolaeva M.D."/>
            <person name="Vamathevan J.J."/>
            <person name="Bass S."/>
            <person name="Qin H."/>
            <person name="Dragoi I."/>
            <person name="Sellers P."/>
            <person name="McDonald L.A."/>
            <person name="Utterback T.R."/>
            <person name="Fleischmann R.D."/>
            <person name="Nierman W.C."/>
            <person name="White O."/>
            <person name="Salzberg S.L."/>
            <person name="Smith H.O."/>
            <person name="Colwell R.R."/>
            <person name="Mekalanos J.J."/>
            <person name="Venter J.C."/>
            <person name="Fraser C.M."/>
        </authorList>
    </citation>
    <scope>NUCLEOTIDE SEQUENCE [LARGE SCALE GENOMIC DNA]</scope>
    <source>
        <strain>ATCC 39315 / El Tor Inaba N16961</strain>
    </source>
</reference>
<reference key="2">
    <citation type="journal article" date="1998" name="J. Bacteriol.">
        <title>Identification of multiple sigma54-dependent transcriptional activators in Vibrio cholerae.</title>
        <authorList>
            <person name="Klose K.E."/>
            <person name="Novik V."/>
            <person name="Mekalanos J.J."/>
        </authorList>
    </citation>
    <scope>INTERACTION WITH SIGMA-54</scope>
</reference>
<keyword id="KW-0067">ATP-binding</keyword>
<keyword id="KW-0238">DNA-binding</keyword>
<keyword id="KW-0547">Nucleotide-binding</keyword>
<keyword id="KW-0597">Phosphoprotein</keyword>
<keyword id="KW-1185">Reference proteome</keyword>
<keyword id="KW-0678">Repressor</keyword>
<keyword id="KW-0804">Transcription</keyword>
<keyword id="KW-0805">Transcription regulation</keyword>
<keyword id="KW-0902">Two-component regulatory system</keyword>
<accession>Q9KT84</accession>
<feature type="chain" id="PRO_0000081115" description="Regulatory protein LuxO">
    <location>
        <begin position="1"/>
        <end position="455"/>
    </location>
</feature>
<feature type="domain" description="Response regulatory" evidence="1">
    <location>
        <begin position="1"/>
        <end position="112"/>
    </location>
</feature>
<feature type="domain" description="Sigma-54 factor interaction" evidence="2">
    <location>
        <begin position="132"/>
        <end position="361"/>
    </location>
</feature>
<feature type="binding site" evidence="2">
    <location>
        <begin position="160"/>
        <end position="167"/>
    </location>
    <ligand>
        <name>ATP</name>
        <dbReference type="ChEBI" id="CHEBI:30616"/>
    </ligand>
</feature>
<feature type="binding site" evidence="2">
    <location>
        <begin position="223"/>
        <end position="232"/>
    </location>
    <ligand>
        <name>ATP</name>
        <dbReference type="ChEBI" id="CHEBI:30616"/>
    </ligand>
</feature>
<feature type="modified residue" description="4-aspartylphosphate" evidence="1">
    <location>
        <position position="47"/>
    </location>
</feature>
<sequence length="455" mass="50839">MVEDTASVAALYRSYLTPLDIDINIVGTGRDAIESIGRREPDLILLDLRLPDMTGMDVLYAVKEKSPDVPIVFMTAHGSIDTAVEAMRHGAQDFLIKPCEADRLRVTVNNAIRKASKLKNDVDNKNQNYQGFIGSSQTMQAVYRTIDSAASSKASIFITGESGTGKEVCAEAIHAASKRGDKPFIAINCAAIPKDLIESELFGHVKGAFTGAATERQGAAEAADGGTLFLDELCEMDLDLQTKLLRFIQTGTFQKVGSSKMKSVDVRFVCATNRDPWKEVQEGRFREDLYYRLYVIPLHLPPLRARGDDVIEIAYSLLGFMSKEEGKDFVRLSAEVVERFRQYEWPGNVRQLQNVLRNVVVLNEGREITLDMLPPPLNQMSAPINRALPLAHENKVSVHEIFPLWMTEKQAIEQAIEACDGNIPRAATYLDVSPSTIYRKLQTWNEKVKEKEKER</sequence>
<gene>
    <name type="primary">luxO</name>
    <name type="ordered locus">VC_1021</name>
</gene>
<dbReference type="EMBL" id="AE003852">
    <property type="protein sequence ID" value="AAF94180.1"/>
    <property type="molecule type" value="Genomic_DNA"/>
</dbReference>
<dbReference type="PIR" id="C82250">
    <property type="entry name" value="C82250"/>
</dbReference>
<dbReference type="RefSeq" id="NP_230666.1">
    <property type="nucleotide sequence ID" value="NC_002505.1"/>
</dbReference>
<dbReference type="RefSeq" id="WP_001888250.1">
    <property type="nucleotide sequence ID" value="NZ_LT906614.1"/>
</dbReference>
<dbReference type="SMR" id="Q9KT84"/>
<dbReference type="STRING" id="243277.VC_1021"/>
<dbReference type="DNASU" id="2614291"/>
<dbReference type="EnsemblBacteria" id="AAF94180">
    <property type="protein sequence ID" value="AAF94180"/>
    <property type="gene ID" value="VC_1021"/>
</dbReference>
<dbReference type="GeneID" id="88785795"/>
<dbReference type="KEGG" id="vch:VC_1021"/>
<dbReference type="PATRIC" id="fig|243277.26.peg.975"/>
<dbReference type="eggNOG" id="COG2204">
    <property type="taxonomic scope" value="Bacteria"/>
</dbReference>
<dbReference type="HOGENOM" id="CLU_000445_0_6_6"/>
<dbReference type="PHI-base" id="PHI:708"/>
<dbReference type="PRO" id="PR:Q9KT84"/>
<dbReference type="Proteomes" id="UP000000584">
    <property type="component" value="Chromosome 1"/>
</dbReference>
<dbReference type="GO" id="GO:0032993">
    <property type="term" value="C:protein-DNA complex"/>
    <property type="evidence" value="ECO:0000318"/>
    <property type="project" value="GO_Central"/>
</dbReference>
<dbReference type="GO" id="GO:0005524">
    <property type="term" value="F:ATP binding"/>
    <property type="evidence" value="ECO:0007669"/>
    <property type="project" value="UniProtKB-KW"/>
</dbReference>
<dbReference type="GO" id="GO:0016887">
    <property type="term" value="F:ATP hydrolysis activity"/>
    <property type="evidence" value="ECO:0007669"/>
    <property type="project" value="InterPro"/>
</dbReference>
<dbReference type="GO" id="GO:0000987">
    <property type="term" value="F:cis-regulatory region sequence-specific DNA binding"/>
    <property type="evidence" value="ECO:0000318"/>
    <property type="project" value="GO_Central"/>
</dbReference>
<dbReference type="GO" id="GO:0001216">
    <property type="term" value="F:DNA-binding transcription activator activity"/>
    <property type="evidence" value="ECO:0000318"/>
    <property type="project" value="GO_Central"/>
</dbReference>
<dbReference type="GO" id="GO:0000160">
    <property type="term" value="P:phosphorelay signal transduction system"/>
    <property type="evidence" value="ECO:0007669"/>
    <property type="project" value="UniProtKB-KW"/>
</dbReference>
<dbReference type="GO" id="GO:0045893">
    <property type="term" value="P:positive regulation of DNA-templated transcription"/>
    <property type="evidence" value="ECO:0000318"/>
    <property type="project" value="GO_Central"/>
</dbReference>
<dbReference type="CDD" id="cd00009">
    <property type="entry name" value="AAA"/>
    <property type="match status" value="1"/>
</dbReference>
<dbReference type="CDD" id="cd17572">
    <property type="entry name" value="REC_NtrC1-like"/>
    <property type="match status" value="1"/>
</dbReference>
<dbReference type="FunFam" id="3.40.50.300:FF:000006">
    <property type="entry name" value="DNA-binding transcriptional regulator NtrC"/>
    <property type="match status" value="1"/>
</dbReference>
<dbReference type="FunFam" id="1.10.10.60:FF:000343">
    <property type="entry name" value="Sigma-54-dependent Fis family transcriptional regulator"/>
    <property type="match status" value="1"/>
</dbReference>
<dbReference type="FunFam" id="1.10.8.60:FF:000120">
    <property type="entry name" value="Sigma-54-dependent Fis family transcriptional regulator"/>
    <property type="match status" value="1"/>
</dbReference>
<dbReference type="FunFam" id="3.40.50.2300:FF:000225">
    <property type="entry name" value="Sigma-54-dependent Fis family transcriptional regulator"/>
    <property type="match status" value="1"/>
</dbReference>
<dbReference type="Gene3D" id="1.10.8.60">
    <property type="match status" value="1"/>
</dbReference>
<dbReference type="Gene3D" id="3.40.50.2300">
    <property type="match status" value="1"/>
</dbReference>
<dbReference type="Gene3D" id="1.10.10.60">
    <property type="entry name" value="Homeodomain-like"/>
    <property type="match status" value="1"/>
</dbReference>
<dbReference type="Gene3D" id="3.40.50.300">
    <property type="entry name" value="P-loop containing nucleotide triphosphate hydrolases"/>
    <property type="match status" value="1"/>
</dbReference>
<dbReference type="InterPro" id="IPR003593">
    <property type="entry name" value="AAA+_ATPase"/>
</dbReference>
<dbReference type="InterPro" id="IPR011006">
    <property type="entry name" value="CheY-like_superfamily"/>
</dbReference>
<dbReference type="InterPro" id="IPR009057">
    <property type="entry name" value="Homeodomain-like_sf"/>
</dbReference>
<dbReference type="InterPro" id="IPR002197">
    <property type="entry name" value="HTH_Fis"/>
</dbReference>
<dbReference type="InterPro" id="IPR027417">
    <property type="entry name" value="P-loop_NTPase"/>
</dbReference>
<dbReference type="InterPro" id="IPR053402">
    <property type="entry name" value="QS_regulatory_LuxO"/>
</dbReference>
<dbReference type="InterPro" id="IPR001789">
    <property type="entry name" value="Sig_transdc_resp-reg_receiver"/>
</dbReference>
<dbReference type="InterPro" id="IPR002078">
    <property type="entry name" value="Sigma_54_int"/>
</dbReference>
<dbReference type="InterPro" id="IPR025943">
    <property type="entry name" value="Sigma_54_int_dom_ATP-bd_2"/>
</dbReference>
<dbReference type="InterPro" id="IPR025944">
    <property type="entry name" value="Sigma_54_int_dom_CS"/>
</dbReference>
<dbReference type="NCBIfam" id="NF041946">
    <property type="entry name" value="LuxO_transreg_Vib"/>
    <property type="match status" value="1"/>
</dbReference>
<dbReference type="PANTHER" id="PTHR32071:SF117">
    <property type="entry name" value="PTS-DEPENDENT DIHYDROXYACETONE KINASE OPERON REGULATORY PROTEIN-RELATED"/>
    <property type="match status" value="1"/>
</dbReference>
<dbReference type="PANTHER" id="PTHR32071">
    <property type="entry name" value="TRANSCRIPTIONAL REGULATORY PROTEIN"/>
    <property type="match status" value="1"/>
</dbReference>
<dbReference type="Pfam" id="PF02954">
    <property type="entry name" value="HTH_8"/>
    <property type="match status" value="1"/>
</dbReference>
<dbReference type="Pfam" id="PF00072">
    <property type="entry name" value="Response_reg"/>
    <property type="match status" value="1"/>
</dbReference>
<dbReference type="Pfam" id="PF00158">
    <property type="entry name" value="Sigma54_activat"/>
    <property type="match status" value="1"/>
</dbReference>
<dbReference type="SMART" id="SM00382">
    <property type="entry name" value="AAA"/>
    <property type="match status" value="1"/>
</dbReference>
<dbReference type="SMART" id="SM00448">
    <property type="entry name" value="REC"/>
    <property type="match status" value="1"/>
</dbReference>
<dbReference type="SUPFAM" id="SSF52172">
    <property type="entry name" value="CheY-like"/>
    <property type="match status" value="1"/>
</dbReference>
<dbReference type="SUPFAM" id="SSF46689">
    <property type="entry name" value="Homeodomain-like"/>
    <property type="match status" value="1"/>
</dbReference>
<dbReference type="SUPFAM" id="SSF52540">
    <property type="entry name" value="P-loop containing nucleoside triphosphate hydrolases"/>
    <property type="match status" value="1"/>
</dbReference>
<dbReference type="PROSITE" id="PS50110">
    <property type="entry name" value="RESPONSE_REGULATORY"/>
    <property type="match status" value="1"/>
</dbReference>
<dbReference type="PROSITE" id="PS00676">
    <property type="entry name" value="SIGMA54_INTERACT_2"/>
    <property type="match status" value="1"/>
</dbReference>
<dbReference type="PROSITE" id="PS00688">
    <property type="entry name" value="SIGMA54_INTERACT_3"/>
    <property type="match status" value="1"/>
</dbReference>
<dbReference type="PROSITE" id="PS50045">
    <property type="entry name" value="SIGMA54_INTERACT_4"/>
    <property type="match status" value="1"/>
</dbReference>
<organism>
    <name type="scientific">Vibrio cholerae serotype O1 (strain ATCC 39315 / El Tor Inaba N16961)</name>
    <dbReference type="NCBI Taxonomy" id="243277"/>
    <lineage>
        <taxon>Bacteria</taxon>
        <taxon>Pseudomonadati</taxon>
        <taxon>Pseudomonadota</taxon>
        <taxon>Gammaproteobacteria</taxon>
        <taxon>Vibrionales</taxon>
        <taxon>Vibrionaceae</taxon>
        <taxon>Vibrio</taxon>
    </lineage>
</organism>
<protein>
    <recommendedName>
        <fullName>Regulatory protein LuxO</fullName>
    </recommendedName>
</protein>
<proteinExistence type="evidence at protein level"/>
<evidence type="ECO:0000255" key="1">
    <source>
        <dbReference type="PROSITE-ProRule" id="PRU00169"/>
    </source>
</evidence>
<evidence type="ECO:0000255" key="2">
    <source>
        <dbReference type="PROSITE-ProRule" id="PRU00193"/>
    </source>
</evidence>